<gene>
    <name evidence="1" type="primary">recR</name>
    <name type="ordered locus">SPH_1780</name>
</gene>
<dbReference type="EMBL" id="CP000936">
    <property type="protein sequence ID" value="ACA37642.1"/>
    <property type="molecule type" value="Genomic_DNA"/>
</dbReference>
<dbReference type="RefSeq" id="WP_000966762.1">
    <property type="nucleotide sequence ID" value="NC_010380.1"/>
</dbReference>
<dbReference type="SMR" id="B1I734"/>
<dbReference type="KEGG" id="spv:SPH_1780"/>
<dbReference type="HOGENOM" id="CLU_060739_1_0_9"/>
<dbReference type="Proteomes" id="UP000002163">
    <property type="component" value="Chromosome"/>
</dbReference>
<dbReference type="GO" id="GO:0003677">
    <property type="term" value="F:DNA binding"/>
    <property type="evidence" value="ECO:0007669"/>
    <property type="project" value="UniProtKB-UniRule"/>
</dbReference>
<dbReference type="GO" id="GO:0008270">
    <property type="term" value="F:zinc ion binding"/>
    <property type="evidence" value="ECO:0007669"/>
    <property type="project" value="UniProtKB-KW"/>
</dbReference>
<dbReference type="GO" id="GO:0006310">
    <property type="term" value="P:DNA recombination"/>
    <property type="evidence" value="ECO:0007669"/>
    <property type="project" value="UniProtKB-UniRule"/>
</dbReference>
<dbReference type="GO" id="GO:0006281">
    <property type="term" value="P:DNA repair"/>
    <property type="evidence" value="ECO:0007669"/>
    <property type="project" value="UniProtKB-UniRule"/>
</dbReference>
<dbReference type="CDD" id="cd01025">
    <property type="entry name" value="TOPRIM_recR"/>
    <property type="match status" value="1"/>
</dbReference>
<dbReference type="Gene3D" id="3.30.60.80">
    <property type="match status" value="1"/>
</dbReference>
<dbReference type="Gene3D" id="3.40.1360.10">
    <property type="match status" value="1"/>
</dbReference>
<dbReference type="Gene3D" id="6.10.250.240">
    <property type="match status" value="1"/>
</dbReference>
<dbReference type="Gene3D" id="1.10.8.420">
    <property type="entry name" value="RecR Domain 1"/>
    <property type="match status" value="1"/>
</dbReference>
<dbReference type="HAMAP" id="MF_00017">
    <property type="entry name" value="RecR"/>
    <property type="match status" value="1"/>
</dbReference>
<dbReference type="InterPro" id="IPR000093">
    <property type="entry name" value="DNA_Rcmb_RecR"/>
</dbReference>
<dbReference type="InterPro" id="IPR023627">
    <property type="entry name" value="Rcmb_RecR"/>
</dbReference>
<dbReference type="InterPro" id="IPR015967">
    <property type="entry name" value="Rcmb_RecR_Znf"/>
</dbReference>
<dbReference type="InterPro" id="IPR006171">
    <property type="entry name" value="TOPRIM_dom"/>
</dbReference>
<dbReference type="InterPro" id="IPR034137">
    <property type="entry name" value="TOPRIM_RecR"/>
</dbReference>
<dbReference type="NCBIfam" id="TIGR00615">
    <property type="entry name" value="recR"/>
    <property type="match status" value="1"/>
</dbReference>
<dbReference type="PANTHER" id="PTHR30446">
    <property type="entry name" value="RECOMBINATION PROTEIN RECR"/>
    <property type="match status" value="1"/>
</dbReference>
<dbReference type="PANTHER" id="PTHR30446:SF0">
    <property type="entry name" value="RECOMBINATION PROTEIN RECR"/>
    <property type="match status" value="1"/>
</dbReference>
<dbReference type="Pfam" id="PF21175">
    <property type="entry name" value="RecR_C"/>
    <property type="match status" value="1"/>
</dbReference>
<dbReference type="Pfam" id="PF21176">
    <property type="entry name" value="RecR_HhH"/>
    <property type="match status" value="1"/>
</dbReference>
<dbReference type="Pfam" id="PF02132">
    <property type="entry name" value="RecR_ZnF"/>
    <property type="match status" value="1"/>
</dbReference>
<dbReference type="Pfam" id="PF13662">
    <property type="entry name" value="Toprim_4"/>
    <property type="match status" value="1"/>
</dbReference>
<dbReference type="SMART" id="SM00493">
    <property type="entry name" value="TOPRIM"/>
    <property type="match status" value="1"/>
</dbReference>
<dbReference type="SUPFAM" id="SSF111304">
    <property type="entry name" value="Recombination protein RecR"/>
    <property type="match status" value="1"/>
</dbReference>
<dbReference type="PROSITE" id="PS01300">
    <property type="entry name" value="RECR"/>
    <property type="match status" value="1"/>
</dbReference>
<dbReference type="PROSITE" id="PS50880">
    <property type="entry name" value="TOPRIM"/>
    <property type="match status" value="1"/>
</dbReference>
<evidence type="ECO:0000255" key="1">
    <source>
        <dbReference type="HAMAP-Rule" id="MF_00017"/>
    </source>
</evidence>
<reference key="1">
    <citation type="journal article" date="2010" name="Genome Biol.">
        <title>Structure and dynamics of the pan-genome of Streptococcus pneumoniae and closely related species.</title>
        <authorList>
            <person name="Donati C."/>
            <person name="Hiller N.L."/>
            <person name="Tettelin H."/>
            <person name="Muzzi A."/>
            <person name="Croucher N.J."/>
            <person name="Angiuoli S.V."/>
            <person name="Oggioni M."/>
            <person name="Dunning Hotopp J.C."/>
            <person name="Hu F.Z."/>
            <person name="Riley D.R."/>
            <person name="Covacci A."/>
            <person name="Mitchell T.J."/>
            <person name="Bentley S.D."/>
            <person name="Kilian M."/>
            <person name="Ehrlich G.D."/>
            <person name="Rappuoli R."/>
            <person name="Moxon E.R."/>
            <person name="Masignani V."/>
        </authorList>
    </citation>
    <scope>NUCLEOTIDE SEQUENCE [LARGE SCALE GENOMIC DNA]</scope>
    <source>
        <strain>Hungary19A-6</strain>
    </source>
</reference>
<comment type="function">
    <text evidence="1">May play a role in DNA repair. It seems to be involved in an RecBC-independent recombinational process of DNA repair. It may act with RecF and RecO.</text>
</comment>
<comment type="similarity">
    <text evidence="1">Belongs to the RecR family.</text>
</comment>
<accession>B1I734</accession>
<organism>
    <name type="scientific">Streptococcus pneumoniae (strain Hungary19A-6)</name>
    <dbReference type="NCBI Taxonomy" id="487214"/>
    <lineage>
        <taxon>Bacteria</taxon>
        <taxon>Bacillati</taxon>
        <taxon>Bacillota</taxon>
        <taxon>Bacilli</taxon>
        <taxon>Lactobacillales</taxon>
        <taxon>Streptococcaceae</taxon>
        <taxon>Streptococcus</taxon>
    </lineage>
</organism>
<feature type="chain" id="PRO_1000089774" description="Recombination protein RecR">
    <location>
        <begin position="1"/>
        <end position="198"/>
    </location>
</feature>
<feature type="domain" description="Toprim" evidence="1">
    <location>
        <begin position="80"/>
        <end position="175"/>
    </location>
</feature>
<feature type="zinc finger region" description="C4-type" evidence="1">
    <location>
        <begin position="57"/>
        <end position="72"/>
    </location>
</feature>
<proteinExistence type="inferred from homology"/>
<protein>
    <recommendedName>
        <fullName evidence="1">Recombination protein RecR</fullName>
    </recommendedName>
</protein>
<name>RECR_STRPI</name>
<keyword id="KW-0227">DNA damage</keyword>
<keyword id="KW-0233">DNA recombination</keyword>
<keyword id="KW-0234">DNA repair</keyword>
<keyword id="KW-0479">Metal-binding</keyword>
<keyword id="KW-0862">Zinc</keyword>
<keyword id="KW-0863">Zinc-finger</keyword>
<sequence>MLYPTPIAKLIDSYSKLPGIGIKTATRLAFYTIGMSDDDVNEFAKNLLSAKRELTYCSVCGRLTDDDPCSICTDPTRDQTTILVLEDSRDVAAMENIQEYHGLYHVLHGLISPMNGISPDDINLKSLMTRLMDSEVSEVIVATNATADGEATSMYLSRLLKPAGIKVTRLARGLAVGADIEYADEVTLLRAIENRTEL</sequence>